<proteinExistence type="inferred from homology"/>
<feature type="signal peptide" evidence="1">
    <location>
        <begin position="1"/>
        <end position="19"/>
    </location>
</feature>
<feature type="chain" id="PRO_1000140660" description="UPF0194 membrane protein YbhG">
    <location>
        <begin position="20"/>
        <end position="331"/>
    </location>
</feature>
<feature type="coiled-coil region" evidence="1">
    <location>
        <begin position="107"/>
        <end position="208"/>
    </location>
</feature>
<organism>
    <name type="scientific">Salmonella newport (strain SL254)</name>
    <dbReference type="NCBI Taxonomy" id="423368"/>
    <lineage>
        <taxon>Bacteria</taxon>
        <taxon>Pseudomonadati</taxon>
        <taxon>Pseudomonadota</taxon>
        <taxon>Gammaproteobacteria</taxon>
        <taxon>Enterobacterales</taxon>
        <taxon>Enterobacteriaceae</taxon>
        <taxon>Salmonella</taxon>
    </lineage>
</organism>
<comment type="subcellular location">
    <subcellularLocation>
        <location evidence="1">Periplasm</location>
    </subcellularLocation>
</comment>
<comment type="similarity">
    <text evidence="1">Belongs to the UPF0194 family.</text>
</comment>
<evidence type="ECO:0000255" key="1">
    <source>
        <dbReference type="HAMAP-Rule" id="MF_01304"/>
    </source>
</evidence>
<name>YBHG_SALNS</name>
<reference key="1">
    <citation type="journal article" date="2011" name="J. Bacteriol.">
        <title>Comparative genomics of 28 Salmonella enterica isolates: evidence for CRISPR-mediated adaptive sublineage evolution.</title>
        <authorList>
            <person name="Fricke W.F."/>
            <person name="Mammel M.K."/>
            <person name="McDermott P.F."/>
            <person name="Tartera C."/>
            <person name="White D.G."/>
            <person name="Leclerc J.E."/>
            <person name="Ravel J."/>
            <person name="Cebula T.A."/>
        </authorList>
    </citation>
    <scope>NUCLEOTIDE SEQUENCE [LARGE SCALE GENOMIC DNA]</scope>
    <source>
        <strain>SL254</strain>
    </source>
</reference>
<dbReference type="EMBL" id="CP001113">
    <property type="protein sequence ID" value="ACF63890.1"/>
    <property type="molecule type" value="Genomic_DNA"/>
</dbReference>
<dbReference type="SMR" id="B4T074"/>
<dbReference type="KEGG" id="see:SNSL254_A0881"/>
<dbReference type="HOGENOM" id="CLU_018816_6_3_6"/>
<dbReference type="Proteomes" id="UP000008824">
    <property type="component" value="Chromosome"/>
</dbReference>
<dbReference type="GO" id="GO:0042597">
    <property type="term" value="C:periplasmic space"/>
    <property type="evidence" value="ECO:0007669"/>
    <property type="project" value="UniProtKB-SubCell"/>
</dbReference>
<dbReference type="FunFam" id="1.10.287.470:FF:000004">
    <property type="entry name" value="UPF0194 membrane protein YbhG"/>
    <property type="match status" value="1"/>
</dbReference>
<dbReference type="FunFam" id="2.40.50.100:FF:000025">
    <property type="entry name" value="UPF0194 membrane protein YbhG"/>
    <property type="match status" value="1"/>
</dbReference>
<dbReference type="Gene3D" id="2.40.30.170">
    <property type="match status" value="1"/>
</dbReference>
<dbReference type="Gene3D" id="2.40.50.100">
    <property type="match status" value="2"/>
</dbReference>
<dbReference type="Gene3D" id="1.10.287.470">
    <property type="entry name" value="Helix hairpin bin"/>
    <property type="match status" value="2"/>
</dbReference>
<dbReference type="HAMAP" id="MF_01304">
    <property type="entry name" value="UPF0194"/>
    <property type="match status" value="1"/>
</dbReference>
<dbReference type="InterPro" id="IPR032317">
    <property type="entry name" value="CusB_D23"/>
</dbReference>
<dbReference type="InterPro" id="IPR022936">
    <property type="entry name" value="UPF0194_membrane_YbhG"/>
</dbReference>
<dbReference type="InterPro" id="IPR050465">
    <property type="entry name" value="UPF0194_transport"/>
</dbReference>
<dbReference type="NCBIfam" id="NF002939">
    <property type="entry name" value="PRK03598.1"/>
    <property type="match status" value="1"/>
</dbReference>
<dbReference type="PANTHER" id="PTHR32347">
    <property type="entry name" value="EFFLUX SYSTEM COMPONENT YKNX-RELATED"/>
    <property type="match status" value="1"/>
</dbReference>
<dbReference type="PANTHER" id="PTHR32347:SF29">
    <property type="entry name" value="UPF0194 MEMBRANE PROTEIN YBHG"/>
    <property type="match status" value="1"/>
</dbReference>
<dbReference type="Pfam" id="PF16576">
    <property type="entry name" value="HlyD_D23"/>
    <property type="match status" value="1"/>
</dbReference>
<dbReference type="SUPFAM" id="SSF111369">
    <property type="entry name" value="HlyD-like secretion proteins"/>
    <property type="match status" value="3"/>
</dbReference>
<keyword id="KW-0175">Coiled coil</keyword>
<keyword id="KW-0574">Periplasm</keyword>
<keyword id="KW-0732">Signal</keyword>
<protein>
    <recommendedName>
        <fullName evidence="1">UPF0194 membrane protein YbhG</fullName>
    </recommendedName>
</protein>
<accession>B4T074</accession>
<sequence length="331" mass="36281">MKKPVVIGLAIAAIVAVIAGGTWWYQSRQDDGLTLYGNVDIRTVNISFRVGGRLASLNVDEGDAIKAGQVLGELDHAPYENALMQAKAGVSVAQAQYDLMLAGYRDEEIAQAAAAVRQAQAAYDYAQNFYNRQQGLWKSRTISANDLENARSSRDQAQATLKSAQDKLSQYRTGNREQDIAQAKASLEQAKAQLAQAQLDLQDTTLIAPANGTLLTRAVEPGSMLNAGSTVLTLSLTRPVWVRAYVDERNLSQTQPGRDILLYTDGRPDKPYHGKIGFVSPTAEFTPKTVETPDLRTDLVYRLRIIVTDADDALRQGMPVTVKFNDEARHE</sequence>
<gene>
    <name evidence="1" type="primary">ybhG</name>
    <name type="ordered locus">SNSL254_A0881</name>
</gene>